<proteinExistence type="inferred from homology"/>
<sequence>MNTTPYLEIKEEVYQALKENRPIVALESTIISHGMPYPQNVEVAKNVEETIRERGAVPATIAIIDGKMKVGLSKEELEFMATSKNILKASRMDLPVILAKGFNAATTVAATMIIAELAGIKVFVTGGIGGVHRNAQETFDISADLQELAKTNVAVISAGPKAILDLQLTKEYLETFGVPVIGYQTDELPCFFSRESGINVPYRVETPKEIASIMKTKWDLGLQGGIFIANPIPKEYSLDFEEIDKTIENAIEEAKKRKIKGKELTPFLLSKINELTKGESLKANIELVYNNAQLGAEIAKEFNILS</sequence>
<organism>
    <name type="scientific">Petrotoga mobilis (strain DSM 10674 / SJ95)</name>
    <dbReference type="NCBI Taxonomy" id="403833"/>
    <lineage>
        <taxon>Bacteria</taxon>
        <taxon>Thermotogati</taxon>
        <taxon>Thermotogota</taxon>
        <taxon>Thermotogae</taxon>
        <taxon>Petrotogales</taxon>
        <taxon>Petrotogaceae</taxon>
        <taxon>Petrotoga</taxon>
    </lineage>
</organism>
<accession>A9BJN0</accession>
<name>PSUG_PETMO</name>
<keyword id="KW-0326">Glycosidase</keyword>
<keyword id="KW-0378">Hydrolase</keyword>
<keyword id="KW-0456">Lyase</keyword>
<keyword id="KW-0464">Manganese</keyword>
<keyword id="KW-0479">Metal-binding</keyword>
<evidence type="ECO:0000255" key="1">
    <source>
        <dbReference type="HAMAP-Rule" id="MF_01876"/>
    </source>
</evidence>
<comment type="function">
    <text evidence="1">Catalyzes the reversible cleavage of pseudouridine 5'-phosphate (PsiMP) to ribose 5-phosphate and uracil. Functions biologically in the cleavage direction, as part of a pseudouridine degradation pathway.</text>
</comment>
<comment type="catalytic activity">
    <reaction evidence="1">
        <text>D-ribose 5-phosphate + uracil = psi-UMP + H2O</text>
        <dbReference type="Rhea" id="RHEA:18337"/>
        <dbReference type="ChEBI" id="CHEBI:15377"/>
        <dbReference type="ChEBI" id="CHEBI:17568"/>
        <dbReference type="ChEBI" id="CHEBI:58380"/>
        <dbReference type="ChEBI" id="CHEBI:78346"/>
        <dbReference type="EC" id="4.2.1.70"/>
    </reaction>
</comment>
<comment type="cofactor">
    <cofactor evidence="1">
        <name>Mn(2+)</name>
        <dbReference type="ChEBI" id="CHEBI:29035"/>
    </cofactor>
    <text evidence="1">Binds 1 Mn(2+) ion per subunit.</text>
</comment>
<comment type="subunit">
    <text evidence="1">Homotrimer.</text>
</comment>
<comment type="similarity">
    <text evidence="1">Belongs to the pseudouridine-5'-phosphate glycosidase family.</text>
</comment>
<dbReference type="EC" id="4.2.1.70" evidence="1"/>
<dbReference type="EMBL" id="CP000879">
    <property type="protein sequence ID" value="ABX31623.1"/>
    <property type="molecule type" value="Genomic_DNA"/>
</dbReference>
<dbReference type="RefSeq" id="WP_012208726.1">
    <property type="nucleotide sequence ID" value="NC_010003.1"/>
</dbReference>
<dbReference type="SMR" id="A9BJN0"/>
<dbReference type="STRING" id="403833.Pmob_0900"/>
<dbReference type="KEGG" id="pmo:Pmob_0900"/>
<dbReference type="eggNOG" id="COG2313">
    <property type="taxonomic scope" value="Bacteria"/>
</dbReference>
<dbReference type="HOGENOM" id="CLU_012201_0_1_0"/>
<dbReference type="OrthoDB" id="9805870at2"/>
<dbReference type="Proteomes" id="UP000000789">
    <property type="component" value="Chromosome"/>
</dbReference>
<dbReference type="GO" id="GO:0005737">
    <property type="term" value="C:cytoplasm"/>
    <property type="evidence" value="ECO:0007669"/>
    <property type="project" value="TreeGrafter"/>
</dbReference>
<dbReference type="GO" id="GO:0016798">
    <property type="term" value="F:hydrolase activity, acting on glycosyl bonds"/>
    <property type="evidence" value="ECO:0007669"/>
    <property type="project" value="UniProtKB-KW"/>
</dbReference>
<dbReference type="GO" id="GO:0046872">
    <property type="term" value="F:metal ion binding"/>
    <property type="evidence" value="ECO:0007669"/>
    <property type="project" value="UniProtKB-KW"/>
</dbReference>
<dbReference type="GO" id="GO:0004730">
    <property type="term" value="F:pseudouridylate synthase activity"/>
    <property type="evidence" value="ECO:0007669"/>
    <property type="project" value="UniProtKB-UniRule"/>
</dbReference>
<dbReference type="GO" id="GO:0046113">
    <property type="term" value="P:nucleobase catabolic process"/>
    <property type="evidence" value="ECO:0007669"/>
    <property type="project" value="UniProtKB-UniRule"/>
</dbReference>
<dbReference type="Gene3D" id="3.40.1790.10">
    <property type="entry name" value="Indigoidine synthase domain"/>
    <property type="match status" value="1"/>
</dbReference>
<dbReference type="HAMAP" id="MF_01876">
    <property type="entry name" value="PsiMP_glycosidase"/>
    <property type="match status" value="1"/>
</dbReference>
<dbReference type="InterPro" id="IPR022830">
    <property type="entry name" value="Indigdn_synthA-like"/>
</dbReference>
<dbReference type="InterPro" id="IPR007342">
    <property type="entry name" value="PsuG"/>
</dbReference>
<dbReference type="PANTHER" id="PTHR42909:SF1">
    <property type="entry name" value="CARBOHYDRATE KINASE PFKB DOMAIN-CONTAINING PROTEIN"/>
    <property type="match status" value="1"/>
</dbReference>
<dbReference type="PANTHER" id="PTHR42909">
    <property type="entry name" value="ZGC:136858"/>
    <property type="match status" value="1"/>
</dbReference>
<dbReference type="Pfam" id="PF04227">
    <property type="entry name" value="Indigoidine_A"/>
    <property type="match status" value="1"/>
</dbReference>
<dbReference type="SUPFAM" id="SSF110581">
    <property type="entry name" value="Indigoidine synthase A-like"/>
    <property type="match status" value="1"/>
</dbReference>
<feature type="chain" id="PRO_0000390534" description="Pseudouridine-5'-phosphate glycosidase">
    <location>
        <begin position="1"/>
        <end position="306"/>
    </location>
</feature>
<feature type="active site" description="Proton donor" evidence="1">
    <location>
        <position position="27"/>
    </location>
</feature>
<feature type="active site" description="Nucleophile" evidence="1">
    <location>
        <position position="161"/>
    </location>
</feature>
<feature type="binding site" evidence="1">
    <location>
        <position position="88"/>
    </location>
    <ligand>
        <name>substrate</name>
    </ligand>
</feature>
<feature type="binding site" evidence="1">
    <location>
        <position position="108"/>
    </location>
    <ligand>
        <name>substrate</name>
    </ligand>
</feature>
<feature type="binding site" evidence="1">
    <location>
        <position position="140"/>
    </location>
    <ligand>
        <name>Mn(2+)</name>
        <dbReference type="ChEBI" id="CHEBI:29035"/>
    </ligand>
</feature>
<feature type="binding site" evidence="1">
    <location>
        <begin position="142"/>
        <end position="144"/>
    </location>
    <ligand>
        <name>substrate</name>
    </ligand>
</feature>
<reference key="1">
    <citation type="submission" date="2007-11" db="EMBL/GenBank/DDBJ databases">
        <title>Complete sequence of Petroga mobilis SJ95.</title>
        <authorList>
            <consortium name="US DOE Joint Genome Institute"/>
            <person name="Copeland A."/>
            <person name="Lucas S."/>
            <person name="Lapidus A."/>
            <person name="Barry K."/>
            <person name="Glavina del Rio T."/>
            <person name="Dalin E."/>
            <person name="Tice H."/>
            <person name="Pitluck S."/>
            <person name="Meincke L."/>
            <person name="Brettin T."/>
            <person name="Bruce D."/>
            <person name="Detter J.C."/>
            <person name="Han C."/>
            <person name="Kuske C.R."/>
            <person name="Schmutz J."/>
            <person name="Larimer F."/>
            <person name="Land M."/>
            <person name="Hauser L."/>
            <person name="Kyrpides N."/>
            <person name="Mikhailova N."/>
            <person name="Noll K."/>
            <person name="Richardson P."/>
        </authorList>
    </citation>
    <scope>NUCLEOTIDE SEQUENCE [LARGE SCALE GENOMIC DNA]</scope>
    <source>
        <strain>DSM 10674 / SJ95</strain>
    </source>
</reference>
<protein>
    <recommendedName>
        <fullName evidence="1">Pseudouridine-5'-phosphate glycosidase</fullName>
        <shortName evidence="1">PsiMP glycosidase</shortName>
        <ecNumber evidence="1">4.2.1.70</ecNumber>
    </recommendedName>
</protein>
<gene>
    <name evidence="1" type="primary">psuG</name>
    <name type="ordered locus">Pmob_0900</name>
</gene>